<comment type="function">
    <text evidence="1">Cell wall formation. Catalyzes the transfer of a GlcNAc subunit on undecaprenyl-pyrophosphoryl-MurNAc-pentapeptide (lipid intermediate I) to form undecaprenyl-pyrophosphoryl-MurNAc-(pentapeptide)GlcNAc (lipid intermediate II).</text>
</comment>
<comment type="catalytic activity">
    <reaction evidence="1">
        <text>di-trans,octa-cis-undecaprenyl diphospho-N-acetyl-alpha-D-muramoyl-L-alanyl-D-glutamyl-meso-2,6-diaminopimeloyl-D-alanyl-D-alanine + UDP-N-acetyl-alpha-D-glucosamine = di-trans,octa-cis-undecaprenyl diphospho-[N-acetyl-alpha-D-glucosaminyl-(1-&gt;4)]-N-acetyl-alpha-D-muramoyl-L-alanyl-D-glutamyl-meso-2,6-diaminopimeloyl-D-alanyl-D-alanine + UDP + H(+)</text>
        <dbReference type="Rhea" id="RHEA:31227"/>
        <dbReference type="ChEBI" id="CHEBI:15378"/>
        <dbReference type="ChEBI" id="CHEBI:57705"/>
        <dbReference type="ChEBI" id="CHEBI:58223"/>
        <dbReference type="ChEBI" id="CHEBI:61387"/>
        <dbReference type="ChEBI" id="CHEBI:61388"/>
        <dbReference type="EC" id="2.4.1.227"/>
    </reaction>
</comment>
<comment type="pathway">
    <text evidence="1">Cell wall biogenesis; peptidoglycan biosynthesis.</text>
</comment>
<comment type="subcellular location">
    <subcellularLocation>
        <location evidence="1">Cell inner membrane</location>
        <topology evidence="1">Peripheral membrane protein</topology>
        <orientation evidence="1">Cytoplasmic side</orientation>
    </subcellularLocation>
</comment>
<comment type="similarity">
    <text evidence="1">Belongs to the glycosyltransferase 28 family. MurG subfamily.</text>
</comment>
<keyword id="KW-0131">Cell cycle</keyword>
<keyword id="KW-0132">Cell division</keyword>
<keyword id="KW-0997">Cell inner membrane</keyword>
<keyword id="KW-1003">Cell membrane</keyword>
<keyword id="KW-0133">Cell shape</keyword>
<keyword id="KW-0961">Cell wall biogenesis/degradation</keyword>
<keyword id="KW-0328">Glycosyltransferase</keyword>
<keyword id="KW-0472">Membrane</keyword>
<keyword id="KW-0573">Peptidoglycan synthesis</keyword>
<keyword id="KW-1185">Reference proteome</keyword>
<keyword id="KW-0808">Transferase</keyword>
<reference key="1">
    <citation type="journal article" date="2002" name="Nature">
        <title>Comparison of the genomes of two Xanthomonas pathogens with differing host specificities.</title>
        <authorList>
            <person name="da Silva A.C.R."/>
            <person name="Ferro J.A."/>
            <person name="Reinach F.C."/>
            <person name="Farah C.S."/>
            <person name="Furlan L.R."/>
            <person name="Quaggio R.B."/>
            <person name="Monteiro-Vitorello C.B."/>
            <person name="Van Sluys M.A."/>
            <person name="Almeida N.F. Jr."/>
            <person name="Alves L.M.C."/>
            <person name="do Amaral A.M."/>
            <person name="Bertolini M.C."/>
            <person name="Camargo L.E.A."/>
            <person name="Camarotte G."/>
            <person name="Cannavan F."/>
            <person name="Cardozo J."/>
            <person name="Chambergo F."/>
            <person name="Ciapina L.P."/>
            <person name="Cicarelli R.M.B."/>
            <person name="Coutinho L.L."/>
            <person name="Cursino-Santos J.R."/>
            <person name="El-Dorry H."/>
            <person name="Faria J.B."/>
            <person name="Ferreira A.J.S."/>
            <person name="Ferreira R.C.C."/>
            <person name="Ferro M.I.T."/>
            <person name="Formighieri E.F."/>
            <person name="Franco M.C."/>
            <person name="Greggio C.C."/>
            <person name="Gruber A."/>
            <person name="Katsuyama A.M."/>
            <person name="Kishi L.T."/>
            <person name="Leite R.P."/>
            <person name="Lemos E.G.M."/>
            <person name="Lemos M.V.F."/>
            <person name="Locali E.C."/>
            <person name="Machado M.A."/>
            <person name="Madeira A.M.B.N."/>
            <person name="Martinez-Rossi N.M."/>
            <person name="Martins E.C."/>
            <person name="Meidanis J."/>
            <person name="Menck C.F.M."/>
            <person name="Miyaki C.Y."/>
            <person name="Moon D.H."/>
            <person name="Moreira L.M."/>
            <person name="Novo M.T.M."/>
            <person name="Okura V.K."/>
            <person name="Oliveira M.C."/>
            <person name="Oliveira V.R."/>
            <person name="Pereira H.A."/>
            <person name="Rossi A."/>
            <person name="Sena J.A.D."/>
            <person name="Silva C."/>
            <person name="de Souza R.F."/>
            <person name="Spinola L.A.F."/>
            <person name="Takita M.A."/>
            <person name="Tamura R.E."/>
            <person name="Teixeira E.C."/>
            <person name="Tezza R.I.D."/>
            <person name="Trindade dos Santos M."/>
            <person name="Truffi D."/>
            <person name="Tsai S.M."/>
            <person name="White F.F."/>
            <person name="Setubal J.C."/>
            <person name="Kitajima J.P."/>
        </authorList>
    </citation>
    <scope>NUCLEOTIDE SEQUENCE [LARGE SCALE GENOMIC DNA]</scope>
    <source>
        <strain>ATCC 33913 / DSM 3586 / NCPPB 528 / LMG 568 / P 25</strain>
    </source>
</reference>
<feature type="chain" id="PRO_0000109241" description="UDP-N-acetylglucosamine--N-acetylmuramyl-(pentapeptide) pyrophosphoryl-undecaprenol N-acetylglucosamine transferase">
    <location>
        <begin position="1"/>
        <end position="427"/>
    </location>
</feature>
<feature type="region of interest" description="Disordered" evidence="2">
    <location>
        <begin position="408"/>
        <end position="427"/>
    </location>
</feature>
<feature type="binding site" evidence="1">
    <location>
        <begin position="29"/>
        <end position="31"/>
    </location>
    <ligand>
        <name>UDP-N-acetyl-alpha-D-glucosamine</name>
        <dbReference type="ChEBI" id="CHEBI:57705"/>
    </ligand>
</feature>
<feature type="binding site" evidence="1">
    <location>
        <position position="141"/>
    </location>
    <ligand>
        <name>UDP-N-acetyl-alpha-D-glucosamine</name>
        <dbReference type="ChEBI" id="CHEBI:57705"/>
    </ligand>
</feature>
<feature type="binding site" evidence="1">
    <location>
        <position position="177"/>
    </location>
    <ligand>
        <name>UDP-N-acetyl-alpha-D-glucosamine</name>
        <dbReference type="ChEBI" id="CHEBI:57705"/>
    </ligand>
</feature>
<feature type="binding site" evidence="1">
    <location>
        <position position="205"/>
    </location>
    <ligand>
        <name>UDP-N-acetyl-alpha-D-glucosamine</name>
        <dbReference type="ChEBI" id="CHEBI:57705"/>
    </ligand>
</feature>
<feature type="binding site" evidence="1">
    <location>
        <position position="258"/>
    </location>
    <ligand>
        <name>UDP-N-acetyl-alpha-D-glucosamine</name>
        <dbReference type="ChEBI" id="CHEBI:57705"/>
    </ligand>
</feature>
<feature type="binding site" evidence="1">
    <location>
        <position position="303"/>
    </location>
    <ligand>
        <name>UDP-N-acetyl-alpha-D-glucosamine</name>
        <dbReference type="ChEBI" id="CHEBI:57705"/>
    </ligand>
</feature>
<dbReference type="EC" id="2.4.1.227" evidence="1"/>
<dbReference type="EMBL" id="AE008922">
    <property type="protein sequence ID" value="AAM40040.1"/>
    <property type="molecule type" value="Genomic_DNA"/>
</dbReference>
<dbReference type="RefSeq" id="NP_636116.1">
    <property type="nucleotide sequence ID" value="NC_003902.1"/>
</dbReference>
<dbReference type="SMR" id="Q8PCK0"/>
<dbReference type="STRING" id="190485.XCC0725"/>
<dbReference type="CAZy" id="GT28">
    <property type="family name" value="Glycosyltransferase Family 28"/>
</dbReference>
<dbReference type="EnsemblBacteria" id="AAM40040">
    <property type="protein sequence ID" value="AAM40040"/>
    <property type="gene ID" value="XCC0725"/>
</dbReference>
<dbReference type="KEGG" id="xcc:XCC0725"/>
<dbReference type="PATRIC" id="fig|190485.4.peg.789"/>
<dbReference type="eggNOG" id="COG0707">
    <property type="taxonomic scope" value="Bacteria"/>
</dbReference>
<dbReference type="HOGENOM" id="CLU_037404_2_0_6"/>
<dbReference type="OrthoDB" id="9808936at2"/>
<dbReference type="UniPathway" id="UPA00219"/>
<dbReference type="Proteomes" id="UP000001010">
    <property type="component" value="Chromosome"/>
</dbReference>
<dbReference type="GO" id="GO:0005886">
    <property type="term" value="C:plasma membrane"/>
    <property type="evidence" value="ECO:0007669"/>
    <property type="project" value="UniProtKB-SubCell"/>
</dbReference>
<dbReference type="GO" id="GO:0051991">
    <property type="term" value="F:UDP-N-acetyl-D-glucosamine:N-acetylmuramoyl-L-alanyl-D-glutamyl-meso-2,6-diaminopimelyl-D-alanyl-D-alanine-diphosphoundecaprenol 4-beta-N-acetylglucosaminlytransferase activity"/>
    <property type="evidence" value="ECO:0007669"/>
    <property type="project" value="RHEA"/>
</dbReference>
<dbReference type="GO" id="GO:0050511">
    <property type="term" value="F:undecaprenyldiphospho-muramoylpentapeptide beta-N-acetylglucosaminyltransferase activity"/>
    <property type="evidence" value="ECO:0000318"/>
    <property type="project" value="GO_Central"/>
</dbReference>
<dbReference type="GO" id="GO:0005975">
    <property type="term" value="P:carbohydrate metabolic process"/>
    <property type="evidence" value="ECO:0007669"/>
    <property type="project" value="InterPro"/>
</dbReference>
<dbReference type="GO" id="GO:0051301">
    <property type="term" value="P:cell division"/>
    <property type="evidence" value="ECO:0007669"/>
    <property type="project" value="UniProtKB-KW"/>
</dbReference>
<dbReference type="GO" id="GO:0071555">
    <property type="term" value="P:cell wall organization"/>
    <property type="evidence" value="ECO:0007669"/>
    <property type="project" value="UniProtKB-KW"/>
</dbReference>
<dbReference type="GO" id="GO:0030259">
    <property type="term" value="P:lipid glycosylation"/>
    <property type="evidence" value="ECO:0007669"/>
    <property type="project" value="UniProtKB-UniRule"/>
</dbReference>
<dbReference type="GO" id="GO:0009252">
    <property type="term" value="P:peptidoglycan biosynthetic process"/>
    <property type="evidence" value="ECO:0007669"/>
    <property type="project" value="UniProtKB-UniRule"/>
</dbReference>
<dbReference type="GO" id="GO:0008360">
    <property type="term" value="P:regulation of cell shape"/>
    <property type="evidence" value="ECO:0007669"/>
    <property type="project" value="UniProtKB-KW"/>
</dbReference>
<dbReference type="CDD" id="cd03785">
    <property type="entry name" value="GT28_MurG"/>
    <property type="match status" value="1"/>
</dbReference>
<dbReference type="Gene3D" id="3.40.50.2000">
    <property type="entry name" value="Glycogen Phosphorylase B"/>
    <property type="match status" value="2"/>
</dbReference>
<dbReference type="HAMAP" id="MF_00033">
    <property type="entry name" value="MurG"/>
    <property type="match status" value="1"/>
</dbReference>
<dbReference type="InterPro" id="IPR006009">
    <property type="entry name" value="GlcNAc_MurG"/>
</dbReference>
<dbReference type="InterPro" id="IPR007235">
    <property type="entry name" value="Glyco_trans_28_C"/>
</dbReference>
<dbReference type="InterPro" id="IPR004276">
    <property type="entry name" value="GlycoTrans_28_N"/>
</dbReference>
<dbReference type="NCBIfam" id="TIGR01133">
    <property type="entry name" value="murG"/>
    <property type="match status" value="1"/>
</dbReference>
<dbReference type="PANTHER" id="PTHR21015:SF22">
    <property type="entry name" value="GLYCOSYLTRANSFERASE"/>
    <property type="match status" value="1"/>
</dbReference>
<dbReference type="PANTHER" id="PTHR21015">
    <property type="entry name" value="UDP-N-ACETYLGLUCOSAMINE--N-ACETYLMURAMYL-(PENTAPEPTIDE) PYROPHOSPHORYL-UNDECAPRENOL N-ACETYLGLUCOSAMINE TRANSFERASE 1"/>
    <property type="match status" value="1"/>
</dbReference>
<dbReference type="Pfam" id="PF04101">
    <property type="entry name" value="Glyco_tran_28_C"/>
    <property type="match status" value="1"/>
</dbReference>
<dbReference type="Pfam" id="PF03033">
    <property type="entry name" value="Glyco_transf_28"/>
    <property type="match status" value="1"/>
</dbReference>
<dbReference type="SUPFAM" id="SSF53756">
    <property type="entry name" value="UDP-Glycosyltransferase/glycogen phosphorylase"/>
    <property type="match status" value="1"/>
</dbReference>
<evidence type="ECO:0000255" key="1">
    <source>
        <dbReference type="HAMAP-Rule" id="MF_00033"/>
    </source>
</evidence>
<evidence type="ECO:0000256" key="2">
    <source>
        <dbReference type="SAM" id="MobiDB-lite"/>
    </source>
</evidence>
<name>MURG_XANCP</name>
<protein>
    <recommendedName>
        <fullName evidence="1">UDP-N-acetylglucosamine--N-acetylmuramyl-(pentapeptide) pyrophosphoryl-undecaprenol N-acetylglucosamine transferase</fullName>
        <ecNumber evidence="1">2.4.1.227</ecNumber>
    </recommendedName>
    <alternativeName>
        <fullName evidence="1">Undecaprenyl-PP-MurNAc-pentapeptide-UDPGlcNAc GlcNAc transferase</fullName>
    </alternativeName>
</protein>
<sequence>MSVEHATPVQQPAHAAASVRPVMILAGGTGGHIFPGLAVAKVLRARGVPVTWLGADGAMETRLVPQHAIQIDTLAISGLRGKGIVKLLGAPVRVMRAVRAAGFVLRKRQPRAVISFGGFAAGPGGLAARLLGVPLLVHEQNRAPGMTNKVLSRFARRVLTGFPGSFAGEEAVGNPVREEIAALPAPATRLVGRGGPVRLLVLGGSQGARALNNAVPAALAALGHPAVDVRHQCGEKLRAEAEAAYAQAAVNASVEPFIADMAAAYAWADLVVCRAGASTLAEVCAAGVGSVLVPFAAAVDDHQTRNAEYLVSAEAAVLLKQDDTLAVRLQQVLQTLLADPARRLAMAQAARTLAKPDAAERIADIILQEAGNGKSGMGNGQSAEQLQEHTVIHQNKRTDQALDAASASLHPIPDSRFPIRTSAGGAQ</sequence>
<proteinExistence type="inferred from homology"/>
<organism>
    <name type="scientific">Xanthomonas campestris pv. campestris (strain ATCC 33913 / DSM 3586 / NCPPB 528 / LMG 568 / P 25)</name>
    <dbReference type="NCBI Taxonomy" id="190485"/>
    <lineage>
        <taxon>Bacteria</taxon>
        <taxon>Pseudomonadati</taxon>
        <taxon>Pseudomonadota</taxon>
        <taxon>Gammaproteobacteria</taxon>
        <taxon>Lysobacterales</taxon>
        <taxon>Lysobacteraceae</taxon>
        <taxon>Xanthomonas</taxon>
    </lineage>
</organism>
<gene>
    <name evidence="1" type="primary">murG</name>
    <name type="ordered locus">XCC0725</name>
</gene>
<accession>Q8PCK0</accession>